<sequence>MGLSWTVPLEWGKNISTTNPLGFFPDHQLDPAFRANTRNPDWDHNPNKDHWTEANKVGVGAFGPGFTPPHGGLLGWSPQAQGMLKTLPADPPPASTNRQSGRQPTPITPPLRDTHPQAMQWNSTTFHQALQDPRVRGLYFPAGGSSSGTVNPVPTTASLISSIFSRIGDPAPNMESITSGFLGPLLVLQAGFFLLTKILTIPQSLDSWWTSLNFLGGAPVCLGQNSQSPTSNHSPTSCPPICPGYRWMCLRRFIIFLFILLLCLIFLLVLLDYQGMLPVCPLIPGSSTTSTGPCRTCMTLAQGTSMFPSCCCSKPSDGNCTCIPIPSSWAFGKFLWEWASARFSWLSLLVPFVQWFAGLSPTVWLSVIWMMWYWGPSLYDILSPFIPLLPIFFCLWVYI</sequence>
<comment type="function">
    <text evidence="3">The large envelope protein exists in two topological conformations, one which is termed 'external' or Le-HBsAg and the other 'internal' or Li-HBsAg. In its external conformation the protein attaches the virus to cell receptors and thereby initiating infection. This interaction determines the species specificity and liver tropism. This attachment induces virion internalization predominantly through caveolin-mediated endocytosis. The large envelope protein also assures fusion between virion membrane and endosomal membrane. In its internal conformation the protein plays a role in virion morphogenesis and mediates the contact with the nucleocapsid like a matrix protein.</text>
</comment>
<comment type="function">
    <text evidence="3">The middle envelope protein plays an important role in the budding of the virion. It is involved in the induction of budding in a nucleocapsid independent way. In this process the majority of envelope proteins bud to form subviral lipoprotein particles of 22 nm of diameter that do not contain a nucleocapsid.</text>
</comment>
<comment type="subunit">
    <molecule>Isoform L</molecule>
    <text evidence="2">In its internal form (Li-HBsAg), interacts with the capsid protein and with the isoform S. Interacts with host chaperone CANX.</text>
</comment>
<comment type="subunit">
    <molecule>Isoform M</molecule>
    <text evidence="2">Associates with host chaperone CANX through its pre-S2 N glycan; this association may be essential for isoform M proper secretion.</text>
</comment>
<comment type="subunit">
    <molecule>Isoform S</molecule>
    <text evidence="2">Interacts with isoform L. Interacts with the antigens of satellite virus HDV (HDVAgs); this interaction is required for encapsidation of HDV genomic RNA.</text>
</comment>
<comment type="subcellular location">
    <subcellularLocation>
        <location evidence="3">Virion membrane</location>
    </subcellularLocation>
</comment>
<comment type="alternative products">
    <event type="alternative splicing"/>
    <event type="alternative initiation"/>
    <isoform>
        <id>Q69603-1</id>
        <name>L</name>
        <name>Large envelope protein</name>
        <name>LHB</name>
        <name>L-HBsAg</name>
        <sequence type="displayed"/>
    </isoform>
    <isoform>
        <id>Q69603-2</id>
        <name>M</name>
        <name>Middle envelope protein</name>
        <name>MHB</name>
        <name>M-HBsAg</name>
        <sequence type="described" ref="VSP_031414"/>
    </isoform>
    <isoform>
        <id>Q69603-3</id>
        <name>S</name>
        <name>Small envelope protein</name>
        <name>SHB</name>
        <name>S-HBsAg</name>
        <sequence type="described" ref="VSP_031413"/>
    </isoform>
</comment>
<comment type="domain">
    <text evidence="3">The large envelope protein is synthesized with the pre-S region at the cytosolic side of the endoplasmic reticulum and, hence will be within the virion after budding. Therefore the pre-S region is not N-glycosylated. Later a post-translational translocation of N-terminal pre-S and TM1 domains occur in about 50% of proteins at the virion surface. These molecules change their topology by an unknown mechanism, resulting in exposure of pre-S region at virion surface. For isoform M in contrast, the pre-S2 region is translocated cotranslationally to the endoplasmic reticulum lumen and is N-glycosylated.</text>
</comment>
<comment type="PTM">
    <text evidence="1 3">Isoform M is N-terminally acetylated by host at a ratio of 90%, and N-glycosylated by host at the pre-S2 region.</text>
</comment>
<comment type="PTM">
    <text evidence="3">Myristoylated.</text>
</comment>
<comment type="biotechnology">
    <text>Systematic vaccination of individuals at risk of exposure to the virus has been the main method of controlling the morbidity and mortality associated with hepatitis B. The first hepatitis B vaccine was manufactured by the purification and inactivation of HBsAg obtained from the plasma of chronic hepatitis B virus carriers. The vaccine is now produced by recombinant DNA techniques and expression of the S isoform in yeast cells. The pre-S region do not seem to induce strong enough antigenic response.</text>
</comment>
<comment type="similarity">
    <text evidence="3">Belongs to the orthohepadnavirus major surface antigen family.</text>
</comment>
<comment type="sequence caution" evidence="5">
    <conflict type="erroneous initiation">
        <sequence resource="EMBL-CDS" id="CAA53355"/>
    </conflict>
</comment>
<protein>
    <recommendedName>
        <fullName evidence="3">Large envelope protein</fullName>
    </recommendedName>
    <alternativeName>
        <fullName evidence="3">L glycoprotein</fullName>
    </alternativeName>
    <alternativeName>
        <fullName evidence="3">L-HBsAg</fullName>
        <shortName evidence="3">LHB</shortName>
    </alternativeName>
    <alternativeName>
        <fullName evidence="3">Large S protein</fullName>
    </alternativeName>
    <alternativeName>
        <fullName evidence="3">Large surface protein</fullName>
    </alternativeName>
    <alternativeName>
        <fullName evidence="3">Major surface antigen</fullName>
    </alternativeName>
</protein>
<feature type="initiator methionine" description="Removed; by host" evidence="3">
    <location>
        <position position="1"/>
    </location>
</feature>
<feature type="chain" id="PRO_0000319089" description="Large envelope protein" evidence="3">
    <location>
        <begin position="2"/>
        <end position="399"/>
    </location>
</feature>
<feature type="topological domain" description="Intravirion; in internal conformation" evidence="3">
    <location>
        <begin position="2"/>
        <end position="252"/>
    </location>
</feature>
<feature type="topological domain" description="Virion surface; in external conformation" evidence="3">
    <location>
        <begin position="2"/>
        <end position="180"/>
    </location>
</feature>
<feature type="transmembrane region" description="Helical; Name=TM1; Note=In external conformation" evidence="3">
    <location>
        <begin position="181"/>
        <end position="201"/>
    </location>
</feature>
<feature type="topological domain" description="Intravirion; in external conformation" evidence="3">
    <location>
        <begin position="202"/>
        <end position="252"/>
    </location>
</feature>
<feature type="transmembrane region" description="Helical; Name=TM2" evidence="3">
    <location>
        <begin position="253"/>
        <end position="273"/>
    </location>
</feature>
<feature type="topological domain" description="Virion surface" evidence="3">
    <location>
        <begin position="274"/>
        <end position="347"/>
    </location>
</feature>
<feature type="transmembrane region" description="Helical" evidence="3">
    <location>
        <begin position="348"/>
        <end position="368"/>
    </location>
</feature>
<feature type="topological domain" description="Intravirion" evidence="3">
    <location>
        <begin position="369"/>
        <end position="374"/>
    </location>
</feature>
<feature type="transmembrane region" description="Helical; Name=TM3" evidence="3">
    <location>
        <begin position="375"/>
        <end position="397"/>
    </location>
</feature>
<feature type="topological domain" description="Virion surface" evidence="3">
    <location>
        <begin position="398"/>
        <end position="399"/>
    </location>
</feature>
<feature type="region of interest" description="Pre-S" evidence="3">
    <location>
        <begin position="2"/>
        <end position="173"/>
    </location>
</feature>
<feature type="region of interest" description="Pre-S1" evidence="3">
    <location>
        <begin position="2"/>
        <end position="118"/>
    </location>
</feature>
<feature type="region of interest" description="Disordered" evidence="4">
    <location>
        <begin position="85"/>
        <end position="110"/>
    </location>
</feature>
<feature type="region of interest" description="Pre-S2" evidence="3">
    <location>
        <begin position="119"/>
        <end position="173"/>
    </location>
</feature>
<feature type="compositionally biased region" description="Polar residues" evidence="4">
    <location>
        <begin position="95"/>
        <end position="105"/>
    </location>
</feature>
<feature type="lipid moiety-binding region" description="N-myristoyl glycine; by host" evidence="3">
    <location>
        <position position="2"/>
    </location>
</feature>
<feature type="glycosylation site" description="N-linked (GlcNAc...) asparagine; by host" evidence="3">
    <location>
        <position position="319"/>
    </location>
</feature>
<feature type="splice variant" id="VSP_031413" description="In isoform S." evidence="5">
    <location>
        <begin position="1"/>
        <end position="173"/>
    </location>
</feature>
<feature type="splice variant" id="VSP_031414" description="In isoform M." evidence="5">
    <location>
        <begin position="1"/>
        <end position="118"/>
    </location>
</feature>
<feature type="modified residue" description="N-acetylmethionine" evidence="5">
    <location sequence="Q69603-2">
        <position position="1"/>
    </location>
</feature>
<feature type="glycosylation site" description="N-linked (GlcNAc...) asparagine" evidence="5">
    <location sequence="Q69603-2">
        <position position="4"/>
    </location>
</feature>
<keyword id="KW-0007">Acetylation</keyword>
<keyword id="KW-0024">Alternative initiation</keyword>
<keyword id="KW-0025">Alternative splicing</keyword>
<keyword id="KW-1166">Caveolin-mediated endocytosis of virus by host</keyword>
<keyword id="KW-1170">Fusion of virus membrane with host endosomal membrane</keyword>
<keyword id="KW-1168">Fusion of virus membrane with host membrane</keyword>
<keyword id="KW-0325">Glycoprotein</keyword>
<keyword id="KW-0945">Host-virus interaction</keyword>
<keyword id="KW-0449">Lipoprotein</keyword>
<keyword id="KW-0472">Membrane</keyword>
<keyword id="KW-0519">Myristate</keyword>
<keyword id="KW-0812">Transmembrane</keyword>
<keyword id="KW-1133">Transmembrane helix</keyword>
<keyword id="KW-1161">Viral attachment to host cell</keyword>
<keyword id="KW-0261">Viral envelope protein</keyword>
<keyword id="KW-1162">Viral penetration into host cytoplasm</keyword>
<keyword id="KW-0946">Virion</keyword>
<keyword id="KW-1164">Virus endocytosis by host</keyword>
<keyword id="KW-1160">Virus entry into host cell</keyword>
<name>HBSAG_HBVE1</name>
<organismHost>
    <name type="scientific">Homo sapiens</name>
    <name type="common">Human</name>
    <dbReference type="NCBI Taxonomy" id="9606"/>
</organismHost>
<organismHost>
    <name type="scientific">Pan troglodytes</name>
    <name type="common">Chimpanzee</name>
    <dbReference type="NCBI Taxonomy" id="9598"/>
</organismHost>
<reference key="1">
    <citation type="journal article" date="1994" name="Virology">
        <title>Complete genomes, phylogenetic relatedness, and structural proteins of six strains of the hepatitis B virus, four of which represent two new genotypes.</title>
        <authorList>
            <person name="Norder H."/>
            <person name="Courouce A.M."/>
            <person name="Magnius L.O."/>
        </authorList>
    </citation>
    <scope>NUCLEOTIDE SEQUENCE [GENOMIC DNA]</scope>
</reference>
<reference key="2">
    <citation type="journal article" date="1996" name="Intervirology">
        <title>Functions of the large hepatitis B virus surface protein in viral particle morphogenesis.</title>
        <authorList>
            <person name="Bruss V."/>
            <person name="Gerhardt E."/>
            <person name="Vieluf K."/>
            <person name="Wunderlich G."/>
        </authorList>
    </citation>
    <scope>REVIEW</scope>
</reference>
<reference key="3">
    <citation type="journal article" date="1998" name="Adv. Exp. Med. Biol.">
        <title>Role of glycan processing in hepatitis B virus envelope protein trafficking.</title>
        <authorList>
            <person name="Block T.M."/>
            <person name="Lu X."/>
            <person name="Mehta A."/>
            <person name="Park J."/>
            <person name="Blumberg B.S."/>
            <person name="Dwek R."/>
        </authorList>
    </citation>
    <scope>REVIEW</scope>
</reference>
<reference key="4">
    <citation type="journal article" date="2004" name="Virus Res.">
        <title>Envelopment of the hepatitis B virus nucleocapsid.</title>
        <authorList>
            <person name="Bruss V."/>
        </authorList>
    </citation>
    <scope>REVIEW</scope>
</reference>
<reference key="5">
    <citation type="journal article" date="2006" name="Cancer Sci.">
        <title>Hepatitis B virus pre-S mutants, endoplasmic reticulum stress and hepatocarcinogenesis.</title>
        <authorList>
            <person name="Wang H.C."/>
            <person name="Huang W."/>
            <person name="Lai M.D."/>
            <person name="Su I.J."/>
        </authorList>
    </citation>
    <scope>REVIEW</scope>
</reference>
<gene>
    <name evidence="3" type="primary">S</name>
</gene>
<proteinExistence type="evidence at protein level"/>
<evidence type="ECO:0000250" key="1">
    <source>
        <dbReference type="UniProtKB" id="P03138"/>
    </source>
</evidence>
<evidence type="ECO:0000250" key="2">
    <source>
        <dbReference type="UniProtKB" id="P03141"/>
    </source>
</evidence>
<evidence type="ECO:0000255" key="3">
    <source>
        <dbReference type="HAMAP-Rule" id="MF_04075"/>
    </source>
</evidence>
<evidence type="ECO:0000256" key="4">
    <source>
        <dbReference type="SAM" id="MobiDB-lite"/>
    </source>
</evidence>
<evidence type="ECO:0000305" key="5"/>
<accession>Q69603</accession>
<dbReference type="EMBL" id="X75664">
    <property type="protein sequence ID" value="CAA53355.1"/>
    <property type="status" value="ALT_INIT"/>
    <property type="molecule type" value="Genomic_DNA"/>
</dbReference>
<dbReference type="PIR" id="JQ1578">
    <property type="entry name" value="JQ1578"/>
</dbReference>
<dbReference type="PIR" id="JQ2079">
    <property type="entry name" value="JQ2079"/>
</dbReference>
<dbReference type="PIR" id="JQ2087">
    <property type="entry name" value="JQ2087"/>
</dbReference>
<dbReference type="PIR" id="JQ2088">
    <property type="entry name" value="JQ2088"/>
</dbReference>
<dbReference type="PIR" id="JQ2089">
    <property type="entry name" value="JQ2089"/>
</dbReference>
<dbReference type="PIR" id="JQ2091">
    <property type="entry name" value="JQ2091"/>
</dbReference>
<dbReference type="PIR" id="JQ2092">
    <property type="entry name" value="JQ2092"/>
</dbReference>
<dbReference type="SMR" id="Q69603"/>
<dbReference type="GlyCosmos" id="Q69603">
    <property type="glycosylation" value="2 sites, No reported glycans"/>
</dbReference>
<dbReference type="Proteomes" id="UP000008538">
    <property type="component" value="Genome"/>
</dbReference>
<dbReference type="GO" id="GO:0016020">
    <property type="term" value="C:membrane"/>
    <property type="evidence" value="ECO:0007669"/>
    <property type="project" value="UniProtKB-UniRule"/>
</dbReference>
<dbReference type="GO" id="GO:0019031">
    <property type="term" value="C:viral envelope"/>
    <property type="evidence" value="ECO:0007669"/>
    <property type="project" value="UniProtKB-KW"/>
</dbReference>
<dbReference type="GO" id="GO:0055036">
    <property type="term" value="C:virion membrane"/>
    <property type="evidence" value="ECO:0007669"/>
    <property type="project" value="UniProtKB-SubCell"/>
</dbReference>
<dbReference type="GO" id="GO:0075513">
    <property type="term" value="P:caveolin-mediated endocytosis of virus by host cell"/>
    <property type="evidence" value="ECO:0007669"/>
    <property type="project" value="UniProtKB-KW"/>
</dbReference>
<dbReference type="GO" id="GO:0039654">
    <property type="term" value="P:fusion of virus membrane with host endosome membrane"/>
    <property type="evidence" value="ECO:0007669"/>
    <property type="project" value="UniProtKB-KW"/>
</dbReference>
<dbReference type="GO" id="GO:0019062">
    <property type="term" value="P:virion attachment to host cell"/>
    <property type="evidence" value="ECO:0007669"/>
    <property type="project" value="UniProtKB-UniRule"/>
</dbReference>
<dbReference type="HAMAP" id="MF_04075">
    <property type="entry name" value="HBV_HBSAG"/>
    <property type="match status" value="1"/>
</dbReference>
<dbReference type="InterPro" id="IPR000349">
    <property type="entry name" value="HBV_HBSAG"/>
</dbReference>
<dbReference type="Pfam" id="PF00695">
    <property type="entry name" value="vMSA"/>
    <property type="match status" value="1"/>
</dbReference>
<organism>
    <name type="scientific">Hepatitis B virus genotype E subtype ayw4 (isolate Kou)</name>
    <name type="common">HBV-E</name>
    <dbReference type="NCBI Taxonomy" id="489495"/>
    <lineage>
        <taxon>Viruses</taxon>
        <taxon>Riboviria</taxon>
        <taxon>Pararnavirae</taxon>
        <taxon>Artverviricota</taxon>
        <taxon>Revtraviricetes</taxon>
        <taxon>Blubervirales</taxon>
        <taxon>Hepadnaviridae</taxon>
        <taxon>Orthohepadnavirus</taxon>
        <taxon>Hepatitis B virus</taxon>
        <taxon>hepatitis B virus genotype E</taxon>
    </lineage>
</organism>